<sequence>MPIGVPKVPYRMPGGQFTDWISIYDRLYRERIIFLGRDVDDEIANQIIAVMLYLDSEDPGKDIYLYINSPGGMVTSGLAIYDTMQHIKSDVVTICVGLAASMGSFLLAAGTKGKRLALPHSRIMIHQPSGGTRGQATDIEIEAREILRIRHQLNQIYANNTNQPLAKIEKDMDRDFFMSAQEAKEYGLIDRVIEERI</sequence>
<proteinExistence type="inferred from homology"/>
<feature type="chain" id="PRO_0000236380" description="ATP-dependent Clp protease proteolytic subunit 2">
    <location>
        <begin position="1"/>
        <end position="197"/>
    </location>
</feature>
<feature type="active site" description="Nucleophile" evidence="1">
    <location>
        <position position="101"/>
    </location>
</feature>
<feature type="active site" evidence="1">
    <location>
        <position position="126"/>
    </location>
</feature>
<keyword id="KW-0963">Cytoplasm</keyword>
<keyword id="KW-0378">Hydrolase</keyword>
<keyword id="KW-0645">Protease</keyword>
<keyword id="KW-0720">Serine protease</keyword>
<reference key="1">
    <citation type="journal article" date="2014" name="Stand. Genomic Sci.">
        <title>Complete genome sequence of Anabaena variabilis ATCC 29413.</title>
        <authorList>
            <person name="Thiel T."/>
            <person name="Pratte B.S."/>
            <person name="Zhong J."/>
            <person name="Goodwin L."/>
            <person name="Copeland A."/>
            <person name="Lucas S."/>
            <person name="Han C."/>
            <person name="Pitluck S."/>
            <person name="Land M.L."/>
            <person name="Kyrpides N.C."/>
            <person name="Woyke T."/>
        </authorList>
    </citation>
    <scope>NUCLEOTIDE SEQUENCE [LARGE SCALE GENOMIC DNA]</scope>
    <source>
        <strain>ATCC 29413 / PCC 7937</strain>
    </source>
</reference>
<gene>
    <name evidence="1" type="primary">clpP2</name>
    <name type="ordered locus">Ava_1305</name>
</gene>
<name>CLPP2_TRIV2</name>
<evidence type="ECO:0000255" key="1">
    <source>
        <dbReference type="HAMAP-Rule" id="MF_00444"/>
    </source>
</evidence>
<dbReference type="EC" id="3.4.21.92" evidence="1"/>
<dbReference type="EMBL" id="CP000117">
    <property type="protein sequence ID" value="ABA20929.1"/>
    <property type="molecule type" value="Genomic_DNA"/>
</dbReference>
<dbReference type="SMR" id="Q3MDK7"/>
<dbReference type="STRING" id="240292.Ava_1305"/>
<dbReference type="MEROPS" id="S14.001"/>
<dbReference type="KEGG" id="ava:Ava_1305"/>
<dbReference type="eggNOG" id="COG0740">
    <property type="taxonomic scope" value="Bacteria"/>
</dbReference>
<dbReference type="HOGENOM" id="CLU_058707_3_2_3"/>
<dbReference type="Proteomes" id="UP000002533">
    <property type="component" value="Chromosome"/>
</dbReference>
<dbReference type="GO" id="GO:0005737">
    <property type="term" value="C:cytoplasm"/>
    <property type="evidence" value="ECO:0007669"/>
    <property type="project" value="UniProtKB-SubCell"/>
</dbReference>
<dbReference type="GO" id="GO:0009368">
    <property type="term" value="C:endopeptidase Clp complex"/>
    <property type="evidence" value="ECO:0007669"/>
    <property type="project" value="TreeGrafter"/>
</dbReference>
<dbReference type="GO" id="GO:0004176">
    <property type="term" value="F:ATP-dependent peptidase activity"/>
    <property type="evidence" value="ECO:0007669"/>
    <property type="project" value="InterPro"/>
</dbReference>
<dbReference type="GO" id="GO:0051117">
    <property type="term" value="F:ATPase binding"/>
    <property type="evidence" value="ECO:0007669"/>
    <property type="project" value="TreeGrafter"/>
</dbReference>
<dbReference type="GO" id="GO:0004252">
    <property type="term" value="F:serine-type endopeptidase activity"/>
    <property type="evidence" value="ECO:0007669"/>
    <property type="project" value="UniProtKB-UniRule"/>
</dbReference>
<dbReference type="GO" id="GO:0006515">
    <property type="term" value="P:protein quality control for misfolded or incompletely synthesized proteins"/>
    <property type="evidence" value="ECO:0007669"/>
    <property type="project" value="TreeGrafter"/>
</dbReference>
<dbReference type="CDD" id="cd07017">
    <property type="entry name" value="S14_ClpP_2"/>
    <property type="match status" value="1"/>
</dbReference>
<dbReference type="FunFam" id="3.90.226.10:FF:000001">
    <property type="entry name" value="ATP-dependent Clp protease proteolytic subunit"/>
    <property type="match status" value="1"/>
</dbReference>
<dbReference type="Gene3D" id="3.90.226.10">
    <property type="entry name" value="2-enoyl-CoA Hydratase, Chain A, domain 1"/>
    <property type="match status" value="1"/>
</dbReference>
<dbReference type="HAMAP" id="MF_00444">
    <property type="entry name" value="ClpP"/>
    <property type="match status" value="1"/>
</dbReference>
<dbReference type="InterPro" id="IPR001907">
    <property type="entry name" value="ClpP"/>
</dbReference>
<dbReference type="InterPro" id="IPR029045">
    <property type="entry name" value="ClpP/crotonase-like_dom_sf"/>
</dbReference>
<dbReference type="InterPro" id="IPR023562">
    <property type="entry name" value="ClpP/TepA"/>
</dbReference>
<dbReference type="InterPro" id="IPR033135">
    <property type="entry name" value="ClpP_His_AS"/>
</dbReference>
<dbReference type="InterPro" id="IPR018215">
    <property type="entry name" value="ClpP_Ser_AS"/>
</dbReference>
<dbReference type="NCBIfam" id="NF001368">
    <property type="entry name" value="PRK00277.1"/>
    <property type="match status" value="1"/>
</dbReference>
<dbReference type="NCBIfam" id="NF009205">
    <property type="entry name" value="PRK12553.1"/>
    <property type="match status" value="1"/>
</dbReference>
<dbReference type="PANTHER" id="PTHR10381">
    <property type="entry name" value="ATP-DEPENDENT CLP PROTEASE PROTEOLYTIC SUBUNIT"/>
    <property type="match status" value="1"/>
</dbReference>
<dbReference type="PANTHER" id="PTHR10381:SF46">
    <property type="entry name" value="ATP-DEPENDENT CLP PROTEASE PROTEOLYTIC SUBUNIT-RELATED PROTEIN 2, CHLOROPLASTIC"/>
    <property type="match status" value="1"/>
</dbReference>
<dbReference type="Pfam" id="PF00574">
    <property type="entry name" value="CLP_protease"/>
    <property type="match status" value="1"/>
</dbReference>
<dbReference type="PRINTS" id="PR00127">
    <property type="entry name" value="CLPPROTEASEP"/>
</dbReference>
<dbReference type="SUPFAM" id="SSF52096">
    <property type="entry name" value="ClpP/crotonase"/>
    <property type="match status" value="1"/>
</dbReference>
<dbReference type="PROSITE" id="PS00382">
    <property type="entry name" value="CLP_PROTEASE_HIS"/>
    <property type="match status" value="1"/>
</dbReference>
<dbReference type="PROSITE" id="PS00381">
    <property type="entry name" value="CLP_PROTEASE_SER"/>
    <property type="match status" value="1"/>
</dbReference>
<organism>
    <name type="scientific">Trichormus variabilis (strain ATCC 29413 / PCC 7937)</name>
    <name type="common">Anabaena variabilis</name>
    <dbReference type="NCBI Taxonomy" id="240292"/>
    <lineage>
        <taxon>Bacteria</taxon>
        <taxon>Bacillati</taxon>
        <taxon>Cyanobacteriota</taxon>
        <taxon>Cyanophyceae</taxon>
        <taxon>Nostocales</taxon>
        <taxon>Nostocaceae</taxon>
        <taxon>Trichormus</taxon>
    </lineage>
</organism>
<accession>Q3MDK7</accession>
<comment type="function">
    <text evidence="1">Cleaves peptides in various proteins in a process that requires ATP hydrolysis. Has a chymotrypsin-like activity. Plays a major role in the degradation of misfolded proteins.</text>
</comment>
<comment type="catalytic activity">
    <reaction evidence="1">
        <text>Hydrolysis of proteins to small peptides in the presence of ATP and magnesium. alpha-casein is the usual test substrate. In the absence of ATP, only oligopeptides shorter than five residues are hydrolyzed (such as succinyl-Leu-Tyr-|-NHMec, and Leu-Tyr-Leu-|-Tyr-Trp, in which cleavage of the -Tyr-|-Leu- and -Tyr-|-Trp bonds also occurs).</text>
        <dbReference type="EC" id="3.4.21.92"/>
    </reaction>
</comment>
<comment type="subunit">
    <text evidence="1">Fourteen ClpP subunits assemble into 2 heptameric rings which stack back to back to give a disk-like structure with a central cavity, resembling the structure of eukaryotic proteasomes.</text>
</comment>
<comment type="subcellular location">
    <subcellularLocation>
        <location evidence="1">Cytoplasm</location>
    </subcellularLocation>
</comment>
<comment type="similarity">
    <text evidence="1">Belongs to the peptidase S14 family.</text>
</comment>
<protein>
    <recommendedName>
        <fullName evidence="1">ATP-dependent Clp protease proteolytic subunit 2</fullName>
        <ecNumber evidence="1">3.4.21.92</ecNumber>
    </recommendedName>
    <alternativeName>
        <fullName evidence="1">Endopeptidase Clp 2</fullName>
    </alternativeName>
</protein>